<dbReference type="EMBL" id="AE006470">
    <property type="protein sequence ID" value="AAM73389.1"/>
    <property type="molecule type" value="Genomic_DNA"/>
</dbReference>
<dbReference type="RefSeq" id="NP_663047.1">
    <property type="nucleotide sequence ID" value="NC_002932.3"/>
</dbReference>
<dbReference type="RefSeq" id="WP_010933826.1">
    <property type="nucleotide sequence ID" value="NC_002932.3"/>
</dbReference>
<dbReference type="SMR" id="Q8KAI7"/>
<dbReference type="STRING" id="194439.CT2173"/>
<dbReference type="EnsemblBacteria" id="AAM73389">
    <property type="protein sequence ID" value="AAM73389"/>
    <property type="gene ID" value="CT2173"/>
</dbReference>
<dbReference type="KEGG" id="cte:CT2173"/>
<dbReference type="PATRIC" id="fig|194439.7.peg.1972"/>
<dbReference type="eggNOG" id="COG0256">
    <property type="taxonomic scope" value="Bacteria"/>
</dbReference>
<dbReference type="HOGENOM" id="CLU_098841_0_1_10"/>
<dbReference type="OrthoDB" id="9810939at2"/>
<dbReference type="Proteomes" id="UP000001007">
    <property type="component" value="Chromosome"/>
</dbReference>
<dbReference type="GO" id="GO:0022625">
    <property type="term" value="C:cytosolic large ribosomal subunit"/>
    <property type="evidence" value="ECO:0007669"/>
    <property type="project" value="TreeGrafter"/>
</dbReference>
<dbReference type="GO" id="GO:0008097">
    <property type="term" value="F:5S rRNA binding"/>
    <property type="evidence" value="ECO:0007669"/>
    <property type="project" value="TreeGrafter"/>
</dbReference>
<dbReference type="GO" id="GO:0003735">
    <property type="term" value="F:structural constituent of ribosome"/>
    <property type="evidence" value="ECO:0007669"/>
    <property type="project" value="InterPro"/>
</dbReference>
<dbReference type="GO" id="GO:0006412">
    <property type="term" value="P:translation"/>
    <property type="evidence" value="ECO:0007669"/>
    <property type="project" value="UniProtKB-UniRule"/>
</dbReference>
<dbReference type="CDD" id="cd00432">
    <property type="entry name" value="Ribosomal_L18_L5e"/>
    <property type="match status" value="1"/>
</dbReference>
<dbReference type="FunFam" id="3.30.420.100:FF:000001">
    <property type="entry name" value="50S ribosomal protein L18"/>
    <property type="match status" value="1"/>
</dbReference>
<dbReference type="Gene3D" id="3.30.420.100">
    <property type="match status" value="1"/>
</dbReference>
<dbReference type="HAMAP" id="MF_01337_B">
    <property type="entry name" value="Ribosomal_uL18_B"/>
    <property type="match status" value="1"/>
</dbReference>
<dbReference type="InterPro" id="IPR004389">
    <property type="entry name" value="Ribosomal_uL18_bac-type"/>
</dbReference>
<dbReference type="InterPro" id="IPR005484">
    <property type="entry name" value="Ribosomal_uL18_bac/euk"/>
</dbReference>
<dbReference type="NCBIfam" id="TIGR00060">
    <property type="entry name" value="L18_bact"/>
    <property type="match status" value="1"/>
</dbReference>
<dbReference type="PANTHER" id="PTHR12899">
    <property type="entry name" value="39S RIBOSOMAL PROTEIN L18, MITOCHONDRIAL"/>
    <property type="match status" value="1"/>
</dbReference>
<dbReference type="PANTHER" id="PTHR12899:SF3">
    <property type="entry name" value="LARGE RIBOSOMAL SUBUNIT PROTEIN UL18M"/>
    <property type="match status" value="1"/>
</dbReference>
<dbReference type="Pfam" id="PF00861">
    <property type="entry name" value="Ribosomal_L18p"/>
    <property type="match status" value="1"/>
</dbReference>
<dbReference type="SUPFAM" id="SSF53137">
    <property type="entry name" value="Translational machinery components"/>
    <property type="match status" value="1"/>
</dbReference>
<reference key="1">
    <citation type="journal article" date="2002" name="Proc. Natl. Acad. Sci. U.S.A.">
        <title>The complete genome sequence of Chlorobium tepidum TLS, a photosynthetic, anaerobic, green-sulfur bacterium.</title>
        <authorList>
            <person name="Eisen J.A."/>
            <person name="Nelson K.E."/>
            <person name="Paulsen I.T."/>
            <person name="Heidelberg J.F."/>
            <person name="Wu M."/>
            <person name="Dodson R.J."/>
            <person name="DeBoy R.T."/>
            <person name="Gwinn M.L."/>
            <person name="Nelson W.C."/>
            <person name="Haft D.H."/>
            <person name="Hickey E.K."/>
            <person name="Peterson J.D."/>
            <person name="Durkin A.S."/>
            <person name="Kolonay J.F."/>
            <person name="Yang F."/>
            <person name="Holt I.E."/>
            <person name="Umayam L.A."/>
            <person name="Mason T.M."/>
            <person name="Brenner M."/>
            <person name="Shea T.P."/>
            <person name="Parksey D.S."/>
            <person name="Nierman W.C."/>
            <person name="Feldblyum T.V."/>
            <person name="Hansen C.L."/>
            <person name="Craven M.B."/>
            <person name="Radune D."/>
            <person name="Vamathevan J.J."/>
            <person name="Khouri H.M."/>
            <person name="White O."/>
            <person name="Gruber T.M."/>
            <person name="Ketchum K.A."/>
            <person name="Venter J.C."/>
            <person name="Tettelin H."/>
            <person name="Bryant D.A."/>
            <person name="Fraser C.M."/>
        </authorList>
    </citation>
    <scope>NUCLEOTIDE SEQUENCE [LARGE SCALE GENOMIC DNA]</scope>
    <source>
        <strain>ATCC 49652 / DSM 12025 / NBRC 103806 / TLS</strain>
    </source>
</reference>
<protein>
    <recommendedName>
        <fullName evidence="1">Large ribosomal subunit protein uL18</fullName>
    </recommendedName>
    <alternativeName>
        <fullName evidence="2">50S ribosomal protein L18</fullName>
    </alternativeName>
</protein>
<sequence>MSQVDKTARRQKIKARSRAVVRGTQERPRLCVFRSLSQIYAQLIDDESGKTLMAASSMSKENAGLTGTKSEVSAAIGKQIAEKALAQGISRVVFDRNGFRYHGRIKALADGAREAGLIF</sequence>
<name>RL18_CHLTE</name>
<accession>Q8KAI7</accession>
<comment type="function">
    <text evidence="1">This is one of the proteins that bind and probably mediate the attachment of the 5S RNA into the large ribosomal subunit, where it forms part of the central protuberance.</text>
</comment>
<comment type="subunit">
    <text evidence="1">Part of the 50S ribosomal subunit; part of the 5S rRNA/L5/L18/L25 subcomplex. Contacts the 5S and 23S rRNAs.</text>
</comment>
<comment type="similarity">
    <text evidence="1">Belongs to the universal ribosomal protein uL18 family.</text>
</comment>
<organism>
    <name type="scientific">Chlorobaculum tepidum (strain ATCC 49652 / DSM 12025 / NBRC 103806 / TLS)</name>
    <name type="common">Chlorobium tepidum</name>
    <dbReference type="NCBI Taxonomy" id="194439"/>
    <lineage>
        <taxon>Bacteria</taxon>
        <taxon>Pseudomonadati</taxon>
        <taxon>Chlorobiota</taxon>
        <taxon>Chlorobiia</taxon>
        <taxon>Chlorobiales</taxon>
        <taxon>Chlorobiaceae</taxon>
        <taxon>Chlorobaculum</taxon>
    </lineage>
</organism>
<proteinExistence type="inferred from homology"/>
<keyword id="KW-1185">Reference proteome</keyword>
<keyword id="KW-0687">Ribonucleoprotein</keyword>
<keyword id="KW-0689">Ribosomal protein</keyword>
<keyword id="KW-0694">RNA-binding</keyword>
<keyword id="KW-0699">rRNA-binding</keyword>
<evidence type="ECO:0000255" key="1">
    <source>
        <dbReference type="HAMAP-Rule" id="MF_01337"/>
    </source>
</evidence>
<evidence type="ECO:0000305" key="2"/>
<feature type="chain" id="PRO_0000131245" description="Large ribosomal subunit protein uL18">
    <location>
        <begin position="1"/>
        <end position="119"/>
    </location>
</feature>
<gene>
    <name evidence="1" type="primary">rplR</name>
    <name type="ordered locus">CT2173</name>
</gene>